<feature type="signal peptide" evidence="4">
    <location>
        <begin position="1"/>
        <end position="40"/>
    </location>
</feature>
<feature type="chain" id="PRO_0000007698" description="Neurogenic locus notch homolog protein 3">
    <location>
        <begin position="41"/>
        <end position="2319"/>
    </location>
</feature>
<feature type="chain" id="PRO_0000007699" description="Notch 3 extracellular truncation" evidence="1">
    <location>
        <begin position="1631"/>
        <end position="2319"/>
    </location>
</feature>
<feature type="chain" id="PRO_0000007700" description="Notch 3 intracellular domain" evidence="1">
    <location>
        <begin position="1664"/>
        <end position="2319"/>
    </location>
</feature>
<feature type="topological domain" description="Extracellular" evidence="4">
    <location>
        <begin position="41"/>
        <end position="1645"/>
    </location>
</feature>
<feature type="transmembrane region" description="Helical" evidence="4">
    <location>
        <begin position="1646"/>
        <end position="1666"/>
    </location>
</feature>
<feature type="topological domain" description="Cytoplasmic" evidence="4">
    <location>
        <begin position="1667"/>
        <end position="2319"/>
    </location>
</feature>
<feature type="domain" description="EGF-like 1" evidence="5">
    <location>
        <begin position="41"/>
        <end position="79"/>
    </location>
</feature>
<feature type="domain" description="EGF-like 2" evidence="5">
    <location>
        <begin position="80"/>
        <end position="120"/>
    </location>
</feature>
<feature type="domain" description="EGF-like 3" evidence="5">
    <location>
        <begin position="121"/>
        <end position="158"/>
    </location>
</feature>
<feature type="domain" description="EGF-like 4; calcium-binding" evidence="5">
    <location>
        <begin position="160"/>
        <end position="197"/>
    </location>
</feature>
<feature type="domain" description="EGF-like 5" evidence="5">
    <location>
        <begin position="199"/>
        <end position="236"/>
    </location>
</feature>
<feature type="domain" description="EGF-like 6; calcium-binding" evidence="5">
    <location>
        <begin position="238"/>
        <end position="274"/>
    </location>
</feature>
<feature type="domain" description="EGF-like 7" evidence="5">
    <location>
        <begin position="276"/>
        <end position="314"/>
    </location>
</feature>
<feature type="domain" description="EGF-like 8; calcium-binding" evidence="5">
    <location>
        <begin position="316"/>
        <end position="352"/>
    </location>
</feature>
<feature type="domain" description="EGF-like 9" evidence="5">
    <location>
        <begin position="353"/>
        <end position="391"/>
    </location>
</feature>
<feature type="domain" description="EGF-like 10; calcium-binding" evidence="5">
    <location>
        <begin position="393"/>
        <end position="431"/>
    </location>
</feature>
<feature type="domain" description="EGF-like 11; calcium-binding" evidence="5">
    <location>
        <begin position="433"/>
        <end position="469"/>
    </location>
</feature>
<feature type="domain" description="EGF-like 12; calcium-binding" evidence="5">
    <location>
        <begin position="471"/>
        <end position="507"/>
    </location>
</feature>
<feature type="domain" description="EGF-like 13; calcium-binding" evidence="5">
    <location>
        <begin position="509"/>
        <end position="545"/>
    </location>
</feature>
<feature type="domain" description="EGF-like 14; calcium-binding" evidence="5">
    <location>
        <begin position="547"/>
        <end position="582"/>
    </location>
</feature>
<feature type="domain" description="EGF-like 15; calcium-binding" evidence="5">
    <location>
        <begin position="584"/>
        <end position="620"/>
    </location>
</feature>
<feature type="domain" description="EGF-like 16; calcium-binding" evidence="5">
    <location>
        <begin position="622"/>
        <end position="657"/>
    </location>
</feature>
<feature type="domain" description="EGF-like 17; calcium-binding" evidence="5">
    <location>
        <begin position="659"/>
        <end position="695"/>
    </location>
</feature>
<feature type="domain" description="EGF-like 18" evidence="5">
    <location>
        <begin position="697"/>
        <end position="732"/>
    </location>
</feature>
<feature type="domain" description="EGF-like 19" evidence="5">
    <location>
        <begin position="736"/>
        <end position="772"/>
    </location>
</feature>
<feature type="domain" description="EGF-like 20" evidence="5">
    <location>
        <begin position="773"/>
        <end position="810"/>
    </location>
</feature>
<feature type="domain" description="EGF-like 21; calcium-binding" evidence="5">
    <location>
        <begin position="812"/>
        <end position="849"/>
    </location>
</feature>
<feature type="domain" description="EGF-like 22; calcium-binding" evidence="5">
    <location>
        <begin position="851"/>
        <end position="887"/>
    </location>
</feature>
<feature type="domain" description="EGF-like 23; calcium-binding" evidence="5">
    <location>
        <begin position="889"/>
        <end position="924"/>
    </location>
</feature>
<feature type="domain" description="EGF-like 24" evidence="5">
    <location>
        <begin position="926"/>
        <end position="962"/>
    </location>
</feature>
<feature type="domain" description="EGF-like 25" evidence="5">
    <location>
        <begin position="964"/>
        <end position="1000"/>
    </location>
</feature>
<feature type="domain" description="EGF-like 26" evidence="5">
    <location>
        <begin position="1002"/>
        <end position="1036"/>
    </location>
</feature>
<feature type="domain" description="EGF-like 27" evidence="9">
    <location>
        <begin position="1038"/>
        <end position="1084"/>
    </location>
</feature>
<feature type="domain" description="EGF-like 28" evidence="5">
    <location>
        <begin position="1086"/>
        <end position="1122"/>
    </location>
</feature>
<feature type="domain" description="EGF-like 29; calcium-binding" evidence="5">
    <location>
        <begin position="1124"/>
        <end position="1160"/>
    </location>
</feature>
<feature type="domain" description="EGF-like 30; calcium-binding" evidence="5">
    <location>
        <begin position="1162"/>
        <end position="1205"/>
    </location>
</feature>
<feature type="domain" description="EGF-like 31" evidence="5">
    <location>
        <begin position="1207"/>
        <end position="1246"/>
    </location>
</feature>
<feature type="domain" description="EGF-like 32" evidence="5">
    <location>
        <begin position="1248"/>
        <end position="1289"/>
    </location>
</feature>
<feature type="domain" description="EGF-like 33" evidence="5">
    <location>
        <begin position="1291"/>
        <end position="1327"/>
    </location>
</feature>
<feature type="domain" description="EGF-like 34" evidence="5">
    <location>
        <begin position="1337"/>
        <end position="1375"/>
    </location>
</feature>
<feature type="repeat" description="LNR 1">
    <location>
        <begin position="1389"/>
        <end position="1429"/>
    </location>
</feature>
<feature type="repeat" description="LNR 2">
    <location>
        <begin position="1430"/>
        <end position="1467"/>
    </location>
</feature>
<feature type="repeat" description="LNR 3">
    <location>
        <begin position="1469"/>
        <end position="1507"/>
    </location>
</feature>
<feature type="repeat" description="ANK 1">
    <location>
        <begin position="1840"/>
        <end position="1869"/>
    </location>
</feature>
<feature type="repeat" description="ANK 2">
    <location>
        <begin position="1873"/>
        <end position="1903"/>
    </location>
</feature>
<feature type="repeat" description="ANK 3">
    <location>
        <begin position="1907"/>
        <end position="1936"/>
    </location>
</feature>
<feature type="repeat" description="ANK 4">
    <location>
        <begin position="1940"/>
        <end position="1969"/>
    </location>
</feature>
<feature type="repeat" description="ANK 5">
    <location>
        <begin position="1973"/>
        <end position="2002"/>
    </location>
</feature>
<feature type="region of interest" description="Disordered" evidence="6">
    <location>
        <begin position="1"/>
        <end position="20"/>
    </location>
</feature>
<feature type="region of interest" description="Disordered" evidence="6">
    <location>
        <begin position="2026"/>
        <end position="2046"/>
    </location>
</feature>
<feature type="region of interest" description="Disordered" evidence="6">
    <location>
        <begin position="2059"/>
        <end position="2129"/>
    </location>
</feature>
<feature type="region of interest" description="Disordered" evidence="6">
    <location>
        <begin position="2197"/>
        <end position="2319"/>
    </location>
</feature>
<feature type="compositionally biased region" description="Basic residues" evidence="6">
    <location>
        <begin position="1"/>
        <end position="14"/>
    </location>
</feature>
<feature type="compositionally biased region" description="Low complexity" evidence="6">
    <location>
        <begin position="2029"/>
        <end position="2046"/>
    </location>
</feature>
<feature type="compositionally biased region" description="Low complexity" evidence="6">
    <location>
        <begin position="2263"/>
        <end position="2288"/>
    </location>
</feature>
<feature type="compositionally biased region" description="Polar residues" evidence="6">
    <location>
        <begin position="2297"/>
        <end position="2306"/>
    </location>
</feature>
<feature type="site" description="Cleavage; by furin-like protease" evidence="1">
    <location>
        <begin position="1573"/>
        <end position="1574"/>
    </location>
</feature>
<feature type="modified residue" description="Omega-N-methylarginine" evidence="3">
    <location>
        <position position="2175"/>
    </location>
</feature>
<feature type="glycosylation site" description="N-linked (GlcNAc...) asparagine" evidence="4">
    <location>
        <position position="1181"/>
    </location>
</feature>
<feature type="glycosylation site" description="N-linked (GlcNAc...) asparagine" evidence="4">
    <location>
        <position position="1338"/>
    </location>
</feature>
<feature type="glycosylation site" description="N-linked (GlcNAc...) asparagine" evidence="4">
    <location>
        <position position="1440"/>
    </location>
</feature>
<feature type="disulfide bond" evidence="1">
    <location>
        <begin position="44"/>
        <end position="56"/>
    </location>
</feature>
<feature type="disulfide bond" evidence="1">
    <location>
        <begin position="50"/>
        <end position="67"/>
    </location>
</feature>
<feature type="disulfide bond" evidence="1">
    <location>
        <begin position="69"/>
        <end position="78"/>
    </location>
</feature>
<feature type="disulfide bond" evidence="1">
    <location>
        <begin position="84"/>
        <end position="95"/>
    </location>
</feature>
<feature type="disulfide bond" evidence="1">
    <location>
        <begin position="89"/>
        <end position="108"/>
    </location>
</feature>
<feature type="disulfide bond" evidence="1">
    <location>
        <begin position="110"/>
        <end position="119"/>
    </location>
</feature>
<feature type="disulfide bond" evidence="1">
    <location>
        <begin position="125"/>
        <end position="136"/>
    </location>
</feature>
<feature type="disulfide bond" evidence="1">
    <location>
        <begin position="130"/>
        <end position="146"/>
    </location>
</feature>
<feature type="disulfide bond" evidence="1">
    <location>
        <begin position="148"/>
        <end position="157"/>
    </location>
</feature>
<feature type="disulfide bond" evidence="1">
    <location>
        <begin position="164"/>
        <end position="176"/>
    </location>
</feature>
<feature type="disulfide bond" evidence="1">
    <location>
        <begin position="170"/>
        <end position="185"/>
    </location>
</feature>
<feature type="disulfide bond" evidence="1">
    <location>
        <begin position="187"/>
        <end position="196"/>
    </location>
</feature>
<feature type="disulfide bond" evidence="1">
    <location>
        <begin position="203"/>
        <end position="214"/>
    </location>
</feature>
<feature type="disulfide bond" evidence="1">
    <location>
        <begin position="208"/>
        <end position="224"/>
    </location>
</feature>
<feature type="disulfide bond" evidence="1">
    <location>
        <begin position="226"/>
        <end position="235"/>
    </location>
</feature>
<feature type="disulfide bond" evidence="1">
    <location>
        <begin position="242"/>
        <end position="253"/>
    </location>
</feature>
<feature type="disulfide bond" evidence="1">
    <location>
        <begin position="247"/>
        <end position="262"/>
    </location>
</feature>
<feature type="disulfide bond" evidence="1">
    <location>
        <begin position="264"/>
        <end position="273"/>
    </location>
</feature>
<feature type="disulfide bond" evidence="1">
    <location>
        <begin position="280"/>
        <end position="293"/>
    </location>
</feature>
<feature type="disulfide bond" evidence="1">
    <location>
        <begin position="287"/>
        <end position="302"/>
    </location>
</feature>
<feature type="disulfide bond" evidence="1">
    <location>
        <begin position="304"/>
        <end position="313"/>
    </location>
</feature>
<feature type="disulfide bond" evidence="1">
    <location>
        <begin position="320"/>
        <end position="331"/>
    </location>
</feature>
<feature type="disulfide bond" evidence="1">
    <location>
        <begin position="325"/>
        <end position="340"/>
    </location>
</feature>
<feature type="disulfide bond" evidence="1">
    <location>
        <begin position="342"/>
        <end position="351"/>
    </location>
</feature>
<feature type="disulfide bond" evidence="1">
    <location>
        <begin position="357"/>
        <end position="368"/>
    </location>
</feature>
<feature type="disulfide bond" evidence="1">
    <location>
        <begin position="362"/>
        <end position="379"/>
    </location>
</feature>
<feature type="disulfide bond" evidence="1">
    <location>
        <begin position="381"/>
        <end position="390"/>
    </location>
</feature>
<feature type="disulfide bond" evidence="1">
    <location>
        <begin position="397"/>
        <end position="410"/>
    </location>
</feature>
<feature type="disulfide bond" evidence="1">
    <location>
        <begin position="404"/>
        <end position="419"/>
    </location>
</feature>
<feature type="disulfide bond" evidence="1">
    <location>
        <begin position="421"/>
        <end position="430"/>
    </location>
</feature>
<feature type="disulfide bond" evidence="1">
    <location>
        <begin position="437"/>
        <end position="448"/>
    </location>
</feature>
<feature type="disulfide bond" evidence="1">
    <location>
        <begin position="442"/>
        <end position="457"/>
    </location>
</feature>
<feature type="disulfide bond" evidence="1">
    <location>
        <begin position="459"/>
        <end position="468"/>
    </location>
</feature>
<feature type="disulfide bond" evidence="1">
    <location>
        <begin position="475"/>
        <end position="486"/>
    </location>
</feature>
<feature type="disulfide bond" evidence="1">
    <location>
        <begin position="480"/>
        <end position="495"/>
    </location>
</feature>
<feature type="disulfide bond" evidence="1">
    <location>
        <begin position="497"/>
        <end position="506"/>
    </location>
</feature>
<feature type="disulfide bond" evidence="1">
    <location>
        <begin position="513"/>
        <end position="524"/>
    </location>
</feature>
<feature type="disulfide bond" evidence="1">
    <location>
        <begin position="518"/>
        <end position="533"/>
    </location>
</feature>
<feature type="disulfide bond" evidence="1">
    <location>
        <begin position="535"/>
        <end position="544"/>
    </location>
</feature>
<feature type="disulfide bond" evidence="1">
    <location>
        <begin position="551"/>
        <end position="561"/>
    </location>
</feature>
<feature type="disulfide bond" evidence="1">
    <location>
        <begin position="556"/>
        <end position="570"/>
    </location>
</feature>
<feature type="disulfide bond" evidence="1">
    <location>
        <begin position="572"/>
        <end position="581"/>
    </location>
</feature>
<feature type="disulfide bond" evidence="1">
    <location>
        <begin position="588"/>
        <end position="599"/>
    </location>
</feature>
<feature type="disulfide bond" evidence="1">
    <location>
        <begin position="593"/>
        <end position="608"/>
    </location>
</feature>
<feature type="disulfide bond" evidence="1">
    <location>
        <begin position="610"/>
        <end position="619"/>
    </location>
</feature>
<feature type="disulfide bond" evidence="1">
    <location>
        <begin position="626"/>
        <end position="636"/>
    </location>
</feature>
<feature type="disulfide bond" evidence="1">
    <location>
        <begin position="631"/>
        <end position="645"/>
    </location>
</feature>
<feature type="disulfide bond" evidence="1">
    <location>
        <begin position="647"/>
        <end position="656"/>
    </location>
</feature>
<feature type="disulfide bond" evidence="1">
    <location>
        <begin position="663"/>
        <end position="674"/>
    </location>
</feature>
<feature type="disulfide bond" evidence="1">
    <location>
        <begin position="668"/>
        <end position="683"/>
    </location>
</feature>
<feature type="disulfide bond" evidence="1">
    <location>
        <begin position="685"/>
        <end position="694"/>
    </location>
</feature>
<feature type="disulfide bond" evidence="1">
    <location>
        <begin position="701"/>
        <end position="711"/>
    </location>
</feature>
<feature type="disulfide bond" evidence="1">
    <location>
        <begin position="706"/>
        <end position="720"/>
    </location>
</feature>
<feature type="disulfide bond" evidence="1">
    <location>
        <begin position="722"/>
        <end position="731"/>
    </location>
</feature>
<feature type="disulfide bond" evidence="1">
    <location>
        <begin position="740"/>
        <end position="751"/>
    </location>
</feature>
<feature type="disulfide bond" evidence="1">
    <location>
        <begin position="745"/>
        <end position="760"/>
    </location>
</feature>
<feature type="disulfide bond" evidence="1">
    <location>
        <begin position="762"/>
        <end position="771"/>
    </location>
</feature>
<feature type="disulfide bond" evidence="1">
    <location>
        <begin position="777"/>
        <end position="788"/>
    </location>
</feature>
<feature type="disulfide bond" evidence="1">
    <location>
        <begin position="782"/>
        <end position="798"/>
    </location>
</feature>
<feature type="disulfide bond" evidence="1">
    <location>
        <begin position="800"/>
        <end position="809"/>
    </location>
</feature>
<feature type="disulfide bond" evidence="1">
    <location>
        <begin position="816"/>
        <end position="828"/>
    </location>
</feature>
<feature type="disulfide bond" evidence="1">
    <location>
        <begin position="822"/>
        <end position="837"/>
    </location>
</feature>
<feature type="disulfide bond" evidence="1">
    <location>
        <begin position="839"/>
        <end position="848"/>
    </location>
</feature>
<feature type="disulfide bond" evidence="1">
    <location>
        <begin position="855"/>
        <end position="866"/>
    </location>
</feature>
<feature type="disulfide bond" evidence="1">
    <location>
        <begin position="860"/>
        <end position="875"/>
    </location>
</feature>
<feature type="disulfide bond" evidence="1">
    <location>
        <begin position="877"/>
        <end position="886"/>
    </location>
</feature>
<feature type="disulfide bond" evidence="1">
    <location>
        <begin position="893"/>
        <end position="903"/>
    </location>
</feature>
<feature type="disulfide bond" evidence="1">
    <location>
        <begin position="898"/>
        <end position="912"/>
    </location>
</feature>
<feature type="disulfide bond" evidence="1">
    <location>
        <begin position="914"/>
        <end position="923"/>
    </location>
</feature>
<feature type="disulfide bond" evidence="1">
    <location>
        <begin position="930"/>
        <end position="941"/>
    </location>
</feature>
<feature type="disulfide bond" evidence="1">
    <location>
        <begin position="935"/>
        <end position="950"/>
    </location>
</feature>
<feature type="disulfide bond" evidence="1">
    <location>
        <begin position="952"/>
        <end position="961"/>
    </location>
</feature>
<feature type="disulfide bond" evidence="1">
    <location>
        <begin position="968"/>
        <end position="979"/>
    </location>
</feature>
<feature type="disulfide bond" evidence="1">
    <location>
        <begin position="973"/>
        <end position="988"/>
    </location>
</feature>
<feature type="disulfide bond" evidence="1">
    <location>
        <begin position="990"/>
        <end position="999"/>
    </location>
</feature>
<feature type="disulfide bond" evidence="1">
    <location>
        <begin position="1006"/>
        <end position="1017"/>
    </location>
</feature>
<feature type="disulfide bond" evidence="1">
    <location>
        <begin position="1011"/>
        <end position="1024"/>
    </location>
</feature>
<feature type="disulfide bond" evidence="1">
    <location>
        <begin position="1026"/>
        <end position="1035"/>
    </location>
</feature>
<feature type="disulfide bond" evidence="9">
    <location>
        <begin position="1042"/>
        <end position="1063"/>
    </location>
</feature>
<feature type="disulfide bond" evidence="1">
    <location>
        <begin position="1057"/>
        <end position="1072"/>
    </location>
</feature>
<feature type="disulfide bond" evidence="1">
    <location>
        <begin position="1074"/>
        <end position="1083"/>
    </location>
</feature>
<feature type="disulfide bond" evidence="1">
    <location>
        <begin position="1090"/>
        <end position="1101"/>
    </location>
</feature>
<feature type="disulfide bond" evidence="1">
    <location>
        <begin position="1095"/>
        <end position="1110"/>
    </location>
</feature>
<feature type="disulfide bond" evidence="1">
    <location>
        <begin position="1112"/>
        <end position="1121"/>
    </location>
</feature>
<feature type="disulfide bond" evidence="1">
    <location>
        <begin position="1128"/>
        <end position="1139"/>
    </location>
</feature>
<feature type="disulfide bond" evidence="1">
    <location>
        <begin position="1133"/>
        <end position="1148"/>
    </location>
</feature>
<feature type="disulfide bond" evidence="1">
    <location>
        <begin position="1150"/>
        <end position="1159"/>
    </location>
</feature>
<feature type="disulfide bond" evidence="1">
    <location>
        <begin position="1166"/>
        <end position="1184"/>
    </location>
</feature>
<feature type="disulfide bond" evidence="1">
    <location>
        <begin position="1178"/>
        <end position="1193"/>
    </location>
</feature>
<feature type="disulfide bond" evidence="1">
    <location>
        <begin position="1195"/>
        <end position="1204"/>
    </location>
</feature>
<feature type="disulfide bond" evidence="1">
    <location>
        <begin position="1211"/>
        <end position="1224"/>
    </location>
</feature>
<feature type="disulfide bond" evidence="1">
    <location>
        <begin position="1216"/>
        <end position="1234"/>
    </location>
</feature>
<feature type="disulfide bond" evidence="1">
    <location>
        <begin position="1236"/>
        <end position="1245"/>
    </location>
</feature>
<feature type="disulfide bond" evidence="1">
    <location>
        <begin position="1252"/>
        <end position="1263"/>
    </location>
</feature>
<feature type="disulfide bond" evidence="1">
    <location>
        <begin position="1257"/>
        <end position="1277"/>
    </location>
</feature>
<feature type="disulfide bond" evidence="1">
    <location>
        <begin position="1279"/>
        <end position="1288"/>
    </location>
</feature>
<feature type="disulfide bond" evidence="1">
    <location>
        <begin position="1295"/>
        <end position="1306"/>
    </location>
</feature>
<feature type="disulfide bond" evidence="1">
    <location>
        <begin position="1300"/>
        <end position="1315"/>
    </location>
</feature>
<feature type="disulfide bond" evidence="1">
    <location>
        <begin position="1317"/>
        <end position="1326"/>
    </location>
</feature>
<feature type="disulfide bond" evidence="1">
    <location>
        <begin position="1341"/>
        <end position="1352"/>
    </location>
</feature>
<feature type="disulfide bond" evidence="1">
    <location>
        <begin position="1346"/>
        <end position="1363"/>
    </location>
</feature>
<feature type="disulfide bond" evidence="1">
    <location>
        <begin position="1365"/>
        <end position="1374"/>
    </location>
</feature>
<feature type="disulfide bond" evidence="1">
    <location>
        <begin position="1389"/>
        <end position="1412"/>
    </location>
</feature>
<feature type="disulfide bond" evidence="1">
    <location>
        <begin position="1394"/>
        <end position="1407"/>
    </location>
</feature>
<feature type="disulfide bond" evidence="1">
    <location>
        <begin position="1403"/>
        <end position="1419"/>
    </location>
</feature>
<feature type="disulfide bond" evidence="1">
    <location>
        <begin position="1430"/>
        <end position="1453"/>
    </location>
</feature>
<feature type="disulfide bond" evidence="1">
    <location>
        <begin position="1435"/>
        <end position="1448"/>
    </location>
</feature>
<feature type="disulfide bond" evidence="1">
    <location>
        <begin position="1444"/>
        <end position="1460"/>
    </location>
</feature>
<feature type="disulfide bond" evidence="1">
    <location>
        <begin position="1469"/>
        <end position="1495"/>
    </location>
</feature>
<feature type="disulfide bond" evidence="1">
    <location>
        <begin position="1477"/>
        <end position="1490"/>
    </location>
</feature>
<feature type="disulfide bond" evidence="1">
    <location>
        <begin position="1486"/>
        <end position="1502"/>
    </location>
</feature>
<evidence type="ECO:0000250" key="1"/>
<evidence type="ECO:0000250" key="2">
    <source>
        <dbReference type="UniProtKB" id="Q61982"/>
    </source>
</evidence>
<evidence type="ECO:0000250" key="3">
    <source>
        <dbReference type="UniProtKB" id="Q9UM47"/>
    </source>
</evidence>
<evidence type="ECO:0000255" key="4"/>
<evidence type="ECO:0000255" key="5">
    <source>
        <dbReference type="PROSITE-ProRule" id="PRU00076"/>
    </source>
</evidence>
<evidence type="ECO:0000256" key="6">
    <source>
        <dbReference type="SAM" id="MobiDB-lite"/>
    </source>
</evidence>
<evidence type="ECO:0000269" key="7">
    <source>
    </source>
</evidence>
<evidence type="ECO:0000269" key="8">
    <source>
    </source>
</evidence>
<evidence type="ECO:0000305" key="9"/>
<sequence length="2319" mass="244301">MGPGARGRRRRRRLMALPPPPPPMRALPLLLLLLAGLGAAAPPCLDGSPCANGGRCTHQQPSREAACLCLPGWVGERCQLEDPCHSGPCAGRGVCQSSVVAGVARFSCRCLRGFRGPDCSLPDPCFSSPCAHGAPCSVGSDGRYACACPPGYQGRNCRSDIDECRAGASCRHGGTCINTPGSFHCLCPLGYTGLLCENPIVPCAPSPCRNGGTCRQSSDVTYDCACLPGFEGQNCEVNVDDCPGHRCLNGGTCVDGVNTYNCQCPPEWTGQFCTEDVDECQLQPNACHNGGTCFNLLGGHSCVCVNGWTGESCSQNIDDCATAVCFHGATCHDRVASFYCACPMGKTGLLCHLDDACVSNPCHEDAICDTNPVSGRAICTCPPGFTGGACDQDVDECSIGANPCEHLGRCVNTQGSFLCQCGRGYTGPRCETDVNECLSGPCRNQATCLDRIGQFTCICMAGFTGTFCEVDIDECQSSPCVNGGVCKDRVNGFSCTCPSGFSGSTCQLDVDECASTPCRNGAKCVDQPDGYECRCAEGFEGTLCERNVDDCSPDPCHHGRCVDGIASFSCACAPGYTGIRCESQVDECRSQPCRYGGKCLDLVDKYLCRCPPGTTGVNCEVNIDDCASNPCTFGVCRDGINRYDCVCQPGFTGPLCNVEINECASSPCGEGGSCVDGENGFHCLCPPGSLPPLCLPANHPCAHKPCSHGVCHDAPGGFQCVCDPGWSGPRCSQSLAPDACESQPCQAGGTCTSDGIGFHCTCAPGFQGHQCEVLSPCTPSLCEHGGHCESDPDQLTVCSCPPGWQGPRCQQDVDECAGASPCGPHGTCTNLPGSFRCICHGGYTGPFCDQDIDDCDPNPCLNGGSCQDGVGSFSCSCLSGFAGPRCARDVDECLSSPCGPGTCTDHVASFTCTCPPGYGGFHCETDLLDCSPSSCFNGGTCVDGVNSFSCLCRPGYTGTHCQYKVDPCFSRPCLHGGICNPTHSGFECTCREGFTGNQCQNPVDWCSQAPCQNGGRCVQTGAYCICPPEWSGPLCDIPSLPCTEAAAHMGVRLEQLCQAGGQCIDKDHSHYCVCPEGRMGSHCEQEVDPCTAQPCQHGGTCRGYMGGYVCECPTGYSGDSCEDDVDECASQPCQNGGSCIDLVAHYLCSCPPGTLGVLCEINEDDCGPGPSLDSGLRCLHNGTCVDLVGGFRCNCPPGYTGLHCEADINECRPGTCHAAHTRDCLQDPGGHFRCICLPGFTGPRCQTALFPCESQPCQHGGQCRPSLGRGGGLTFTCHCVQPFWGLRCERVARSCRELQCPVGIPCQQTARGPRCACPPGLSGPSCRVSRASPSGATNTSCAATPCLHGGSCLPVQSVPFFRCVCAPGWGGPRCETPSAAPEVPEEPRCPRAACQAKRGDQNCDRECNSPGCGWDGGDCSLNVDDPWRQCEALQCWRLFNNSRCDPACSSPACLYDNFDCYSGGRDRTCNPVYKKYCADHFADGRCDQGCNTEECGWDGLDCASEVPALLARGVLVLTVLLPPEELLRSSADFLQRLSAILRTSLRFRLDARGQAMVFPYHRPSPGSESRVRRELGPEVIGSVVMLEIDNRLCLKSAENDHCFPDAQSAADYLGALSAVERLDFPYPLRDVRGEPLEPPEQSVPLLPLLVAGAVFLLVIFVLGVMVARRKREHSTLWFPEGFALHKDIAAGHKGRREPVGQDALGMKNMTKGESLMGEVATDWNDSECPEAKRLKVEEPGMGAEEPVDCRQWTQHHLVAADIRVAPAMALTPPQGDADADGMDVNVRGPDGFTPLMLASFCGGALEPMPAEEDEADDTSASIISDLICQGAQLGARTDRTGETALHLAARYARADAAKRLLDAGADTNAQDHSGRTPLHTAVTADAQGVFQILIRNRSTDLDARMADGSTALILAARLAVEGMVEELIASHADVNAVDELGKSALHWAAAVNNVEATLALLKNGANKDMQDSKEETPLFLAAREGSYEAAKLLLDHFANREITDHLDRLPRDVAQERLHQDIVRLLDQPSGPRSPSGPHGLGPLLCPPGAFLPGLKAVQSGTKKSRRPPGKTGLGPQGTRGRGKKLTLACPGPLADSSVTLSPVDSLDSPRPFGGPPASPGGFPLEGPYATTATTVSLAQLGASRAGPLGRQPPGGCVLSLGLLNPVAVPLDWARLPPPAPPGPSFLLPLAPGSQLLNPATPVSPHERPPPYLAAPGHGEEYPAAGTHSSPTKARFLRVPSEHPYLTPSPESPEHWASPSPPSLSDWSDSTPSPATATSATAAGALPAQPHPISVPSLPQSQTQLGPQPEVTPKRQVMA</sequence>
<keyword id="KW-0010">Activator</keyword>
<keyword id="KW-0040">ANK repeat</keyword>
<keyword id="KW-1003">Cell membrane</keyword>
<keyword id="KW-0217">Developmental protein</keyword>
<keyword id="KW-0221">Differentiation</keyword>
<keyword id="KW-1015">Disulfide bond</keyword>
<keyword id="KW-0245">EGF-like domain</keyword>
<keyword id="KW-0325">Glycoprotein</keyword>
<keyword id="KW-0472">Membrane</keyword>
<keyword id="KW-0488">Methylation</keyword>
<keyword id="KW-0914">Notch signaling pathway</keyword>
<keyword id="KW-0539">Nucleus</keyword>
<keyword id="KW-0597">Phosphoprotein</keyword>
<keyword id="KW-0675">Receptor</keyword>
<keyword id="KW-1185">Reference proteome</keyword>
<keyword id="KW-0677">Repeat</keyword>
<keyword id="KW-0732">Signal</keyword>
<keyword id="KW-0804">Transcription</keyword>
<keyword id="KW-0805">Transcription regulation</keyword>
<keyword id="KW-0812">Transmembrane</keyword>
<keyword id="KW-1133">Transmembrane helix</keyword>
<name>NOTC3_RAT</name>
<proteinExistence type="evidence at transcript level"/>
<organism>
    <name type="scientific">Rattus norvegicus</name>
    <name type="common">Rat</name>
    <dbReference type="NCBI Taxonomy" id="10116"/>
    <lineage>
        <taxon>Eukaryota</taxon>
        <taxon>Metazoa</taxon>
        <taxon>Chordata</taxon>
        <taxon>Craniata</taxon>
        <taxon>Vertebrata</taxon>
        <taxon>Euteleostomi</taxon>
        <taxon>Mammalia</taxon>
        <taxon>Eutheria</taxon>
        <taxon>Euarchontoglires</taxon>
        <taxon>Glires</taxon>
        <taxon>Rodentia</taxon>
        <taxon>Myomorpha</taxon>
        <taxon>Muroidea</taxon>
        <taxon>Muridae</taxon>
        <taxon>Murinae</taxon>
        <taxon>Rattus</taxon>
    </lineage>
</organism>
<reference key="1">
    <citation type="submission" date="2000-09" db="EMBL/GenBank/DDBJ databases">
        <title>Rattus norvegicus mRNA for Notch 3.</title>
        <authorList>
            <person name="Haritunians T."/>
            <person name="Boulter J."/>
            <person name="Weinmaster G."/>
            <person name="Schanen N.C."/>
        </authorList>
    </citation>
    <scope>NUCLEOTIDE SEQUENCE [MRNA]</scope>
</reference>
<reference key="2">
    <citation type="journal article" date="2001" name="Neuron">
        <title>Notch1 and Notch3 instructively restrict bFGF-responsive multipotent neural progenitor cells to an astroglial fate.</title>
        <authorList>
            <person name="Tanigaki K."/>
            <person name="Nogaki F."/>
            <person name="Takahashi J."/>
            <person name="Tashiro K."/>
            <person name="Kurooka H."/>
            <person name="Honjo T."/>
        </authorList>
    </citation>
    <scope>FUNCTION</scope>
</reference>
<reference key="3">
    <citation type="journal article" date="2001" name="J. Comp. Neurol.">
        <title>Expression patterns of Notch1, Notch2, and Notch3 suggest multiple functional roles for the Notch-DSL signaling system during brain development.</title>
        <authorList>
            <person name="Irvin D.K."/>
            <person name="Zurcher S.D."/>
            <person name="Nguyen T."/>
            <person name="Weinmaster G."/>
            <person name="Kornblum H.I."/>
        </authorList>
    </citation>
    <scope>TISSUE SPECIFICITY</scope>
</reference>
<accession>Q9R172</accession>
<gene>
    <name type="primary">Notch3</name>
</gene>
<dbReference type="EMBL" id="AF164486">
    <property type="protein sequence ID" value="AAD46653.2"/>
    <property type="molecule type" value="mRNA"/>
</dbReference>
<dbReference type="RefSeq" id="NP_064472.2">
    <property type="nucleotide sequence ID" value="NM_020087.2"/>
</dbReference>
<dbReference type="SMR" id="Q9R172"/>
<dbReference type="FunCoup" id="Q9R172">
    <property type="interactions" value="689"/>
</dbReference>
<dbReference type="STRING" id="10116.ENSRNOP00000037570"/>
<dbReference type="GlyCosmos" id="Q9R172">
    <property type="glycosylation" value="3 sites, No reported glycans"/>
</dbReference>
<dbReference type="GlyGen" id="Q9R172">
    <property type="glycosylation" value="4 sites"/>
</dbReference>
<dbReference type="PhosphoSitePlus" id="Q9R172"/>
<dbReference type="PaxDb" id="10116-ENSRNOP00000037570"/>
<dbReference type="GeneID" id="56761"/>
<dbReference type="KEGG" id="rno:56761"/>
<dbReference type="UCSC" id="RGD:620761">
    <property type="organism name" value="rat"/>
</dbReference>
<dbReference type="AGR" id="RGD:620761"/>
<dbReference type="CTD" id="4854"/>
<dbReference type="RGD" id="620761">
    <property type="gene designation" value="Notch3"/>
</dbReference>
<dbReference type="eggNOG" id="KOG1217">
    <property type="taxonomic scope" value="Eukaryota"/>
</dbReference>
<dbReference type="InParanoid" id="Q9R172"/>
<dbReference type="OrthoDB" id="283575at2759"/>
<dbReference type="PhylomeDB" id="Q9R172"/>
<dbReference type="Reactome" id="R-RNO-1912420">
    <property type="pathway name" value="Pre-NOTCH Processing in Golgi"/>
</dbReference>
<dbReference type="Reactome" id="R-RNO-350054">
    <property type="pathway name" value="Notch-HLH transcription pathway"/>
</dbReference>
<dbReference type="Reactome" id="R-RNO-9013507">
    <property type="pathway name" value="NOTCH3 Activation and Transmission of Signal to the Nucleus"/>
</dbReference>
<dbReference type="Reactome" id="R-RNO-9017802">
    <property type="pathway name" value="Noncanonical activation of NOTCH3"/>
</dbReference>
<dbReference type="PRO" id="PR:Q9R172"/>
<dbReference type="Proteomes" id="UP000002494">
    <property type="component" value="Unplaced"/>
</dbReference>
<dbReference type="GO" id="GO:0009986">
    <property type="term" value="C:cell surface"/>
    <property type="evidence" value="ECO:0000318"/>
    <property type="project" value="GO_Central"/>
</dbReference>
<dbReference type="GO" id="GO:0005634">
    <property type="term" value="C:nucleus"/>
    <property type="evidence" value="ECO:0007669"/>
    <property type="project" value="UniProtKB-SubCell"/>
</dbReference>
<dbReference type="GO" id="GO:0005886">
    <property type="term" value="C:plasma membrane"/>
    <property type="evidence" value="ECO:0000250"/>
    <property type="project" value="UniProtKB"/>
</dbReference>
<dbReference type="GO" id="GO:0043235">
    <property type="term" value="C:receptor complex"/>
    <property type="evidence" value="ECO:0000266"/>
    <property type="project" value="RGD"/>
</dbReference>
<dbReference type="GO" id="GO:0005509">
    <property type="term" value="F:calcium ion binding"/>
    <property type="evidence" value="ECO:0007669"/>
    <property type="project" value="InterPro"/>
</dbReference>
<dbReference type="GO" id="GO:0019899">
    <property type="term" value="F:enzyme binding"/>
    <property type="evidence" value="ECO:0000266"/>
    <property type="project" value="RGD"/>
</dbReference>
<dbReference type="GO" id="GO:0042802">
    <property type="term" value="F:identical protein binding"/>
    <property type="evidence" value="ECO:0000266"/>
    <property type="project" value="RGD"/>
</dbReference>
<dbReference type="GO" id="GO:0038023">
    <property type="term" value="F:signaling receptor activity"/>
    <property type="evidence" value="ECO:0000250"/>
    <property type="project" value="UniProtKB"/>
</dbReference>
<dbReference type="GO" id="GO:0048844">
    <property type="term" value="P:artery morphogenesis"/>
    <property type="evidence" value="ECO:0000266"/>
    <property type="project" value="RGD"/>
</dbReference>
<dbReference type="GO" id="GO:0036120">
    <property type="term" value="P:cellular response to platelet-derived growth factor stimulus"/>
    <property type="evidence" value="ECO:0000270"/>
    <property type="project" value="RGD"/>
</dbReference>
<dbReference type="GO" id="GO:0030900">
    <property type="term" value="P:forebrain development"/>
    <property type="evidence" value="ECO:0000266"/>
    <property type="project" value="RGD"/>
</dbReference>
<dbReference type="GO" id="GO:0072104">
    <property type="term" value="P:glomerular capillary formation"/>
    <property type="evidence" value="ECO:0000266"/>
    <property type="project" value="RGD"/>
</dbReference>
<dbReference type="GO" id="GO:0045596">
    <property type="term" value="P:negative regulation of cell differentiation"/>
    <property type="evidence" value="ECO:0000266"/>
    <property type="project" value="RGD"/>
</dbReference>
<dbReference type="GO" id="GO:0045665">
    <property type="term" value="P:negative regulation of neuron differentiation"/>
    <property type="evidence" value="ECO:0000266"/>
    <property type="project" value="RGD"/>
</dbReference>
<dbReference type="GO" id="GO:0000122">
    <property type="term" value="P:negative regulation of transcription by RNA polymerase II"/>
    <property type="evidence" value="ECO:0000266"/>
    <property type="project" value="RGD"/>
</dbReference>
<dbReference type="GO" id="GO:0014016">
    <property type="term" value="P:neuroblast differentiation"/>
    <property type="evidence" value="ECO:0000266"/>
    <property type="project" value="RGD"/>
</dbReference>
<dbReference type="GO" id="GO:0030182">
    <property type="term" value="P:neuron differentiation"/>
    <property type="evidence" value="ECO:0000266"/>
    <property type="project" value="RGD"/>
</dbReference>
<dbReference type="GO" id="GO:0048663">
    <property type="term" value="P:neuron fate commitment"/>
    <property type="evidence" value="ECO:0000266"/>
    <property type="project" value="RGD"/>
</dbReference>
<dbReference type="GO" id="GO:0007219">
    <property type="term" value="P:Notch signaling pathway"/>
    <property type="evidence" value="ECO:0000314"/>
    <property type="project" value="RGD"/>
</dbReference>
<dbReference type="GO" id="GO:1902895">
    <property type="term" value="P:positive regulation of miRNA transcription"/>
    <property type="evidence" value="ECO:0000266"/>
    <property type="project" value="RGD"/>
</dbReference>
<dbReference type="GO" id="GO:0048661">
    <property type="term" value="P:positive regulation of smooth muscle cell proliferation"/>
    <property type="evidence" value="ECO:0000266"/>
    <property type="project" value="RGD"/>
</dbReference>
<dbReference type="GO" id="GO:0045944">
    <property type="term" value="P:positive regulation of transcription by RNA polymerase II"/>
    <property type="evidence" value="ECO:0000266"/>
    <property type="project" value="RGD"/>
</dbReference>
<dbReference type="GO" id="GO:0042246">
    <property type="term" value="P:tissue regeneration"/>
    <property type="evidence" value="ECO:0000270"/>
    <property type="project" value="RGD"/>
</dbReference>
<dbReference type="GO" id="GO:0042060">
    <property type="term" value="P:wound healing"/>
    <property type="evidence" value="ECO:0000270"/>
    <property type="project" value="UniProtKB"/>
</dbReference>
<dbReference type="CDD" id="cd00054">
    <property type="entry name" value="EGF_CA"/>
    <property type="match status" value="22"/>
</dbReference>
<dbReference type="CDD" id="cd21704">
    <property type="entry name" value="JMTM_Notch3"/>
    <property type="match status" value="1"/>
</dbReference>
<dbReference type="FunFam" id="2.10.25.10:FF:000117">
    <property type="entry name" value="Delta-like protein"/>
    <property type="match status" value="1"/>
</dbReference>
<dbReference type="FunFam" id="2.10.25.10:FF:000038">
    <property type="entry name" value="Fibrillin 2"/>
    <property type="match status" value="1"/>
</dbReference>
<dbReference type="FunFam" id="1.25.40.20:FF:000005">
    <property type="entry name" value="Neurogenic locus notch 1"/>
    <property type="match status" value="1"/>
</dbReference>
<dbReference type="FunFam" id="2.10.25.10:FF:000004">
    <property type="entry name" value="Neurogenic locus notch 1"/>
    <property type="match status" value="3"/>
</dbReference>
<dbReference type="FunFam" id="2.10.25.10:FF:000080">
    <property type="entry name" value="Neurogenic locus notch 1"/>
    <property type="match status" value="1"/>
</dbReference>
<dbReference type="FunFam" id="2.10.25.10:FF:000136">
    <property type="entry name" value="Neurogenic locus notch 1"/>
    <property type="match status" value="1"/>
</dbReference>
<dbReference type="FunFam" id="3.30.300.320:FF:000001">
    <property type="entry name" value="Neurogenic locus notch 1"/>
    <property type="match status" value="1"/>
</dbReference>
<dbReference type="FunFam" id="2.10.25.10:FF:000534">
    <property type="entry name" value="Neurogenic locus notch homolog protein 3"/>
    <property type="match status" value="1"/>
</dbReference>
<dbReference type="FunFam" id="2.10.25.10:FF:000687">
    <property type="entry name" value="Neurogenic locus notch homolog protein 3"/>
    <property type="match status" value="1"/>
</dbReference>
<dbReference type="FunFam" id="3.30.70.3310:FF:000002">
    <property type="entry name" value="Neurogenic locus notch homolog protein 3"/>
    <property type="match status" value="1"/>
</dbReference>
<dbReference type="FunFam" id="2.10.25.10:FF:000031">
    <property type="entry name" value="neurogenic locus notch homolog protein 3"/>
    <property type="match status" value="2"/>
</dbReference>
<dbReference type="FunFam" id="2.10.25.10:FF:000100">
    <property type="entry name" value="neurogenic locus notch homolog protein 3"/>
    <property type="match status" value="3"/>
</dbReference>
<dbReference type="FunFam" id="2.10.25.10:FF:000272">
    <property type="entry name" value="neurogenic locus notch homolog protein 3"/>
    <property type="match status" value="1"/>
</dbReference>
<dbReference type="FunFam" id="2.10.25.10:FF:000446">
    <property type="entry name" value="neurogenic locus notch homolog protein 3"/>
    <property type="match status" value="1"/>
</dbReference>
<dbReference type="FunFam" id="2.10.25.10:FF:000455">
    <property type="entry name" value="neurogenic locus notch homolog protein 3"/>
    <property type="match status" value="1"/>
</dbReference>
<dbReference type="FunFam" id="2.10.25.10:FF:000060">
    <property type="entry name" value="Neurogenic locus notch protein 1"/>
    <property type="match status" value="1"/>
</dbReference>
<dbReference type="FunFam" id="2.10.25.10:FF:000092">
    <property type="entry name" value="Neurogenic locus notch protein 1"/>
    <property type="match status" value="1"/>
</dbReference>
<dbReference type="FunFam" id="2.10.25.10:FF:000127">
    <property type="entry name" value="Neurogenic locus notch protein 1"/>
    <property type="match status" value="1"/>
</dbReference>
<dbReference type="FunFam" id="2.10.25.10:FF:000125">
    <property type="entry name" value="Neurogenic locus notch protein-like"/>
    <property type="match status" value="2"/>
</dbReference>
<dbReference type="FunFam" id="2.10.25.10:FF:000109">
    <property type="entry name" value="Notch homolog 4, [Drosophila]"/>
    <property type="match status" value="1"/>
</dbReference>
<dbReference type="FunFam" id="2.10.25.10:FF:000299">
    <property type="entry name" value="Notch receptor 3"/>
    <property type="match status" value="2"/>
</dbReference>
<dbReference type="FunFam" id="2.10.25.10:FF:000522">
    <property type="entry name" value="Notch receptor 3"/>
    <property type="match status" value="1"/>
</dbReference>
<dbReference type="FunFam" id="2.10.25.10:FF:000718">
    <property type="entry name" value="Notch receptor 3"/>
    <property type="match status" value="1"/>
</dbReference>
<dbReference type="FunFam" id="2.10.25.10:FF:000143">
    <property type="entry name" value="Protein crumbs 1"/>
    <property type="match status" value="1"/>
</dbReference>
<dbReference type="FunFam" id="2.10.25.10:FF:000146">
    <property type="entry name" value="Putative neurogenic locus notch"/>
    <property type="match status" value="1"/>
</dbReference>
<dbReference type="FunFam" id="2.10.25.10:FF:000472">
    <property type="entry name" value="Uncharacterized protein, isoform A"/>
    <property type="match status" value="1"/>
</dbReference>
<dbReference type="Gene3D" id="3.30.300.320">
    <property type="match status" value="1"/>
</dbReference>
<dbReference type="Gene3D" id="3.30.70.3310">
    <property type="match status" value="1"/>
</dbReference>
<dbReference type="Gene3D" id="1.25.40.20">
    <property type="entry name" value="Ankyrin repeat-containing domain"/>
    <property type="match status" value="1"/>
</dbReference>
<dbReference type="Gene3D" id="2.10.25.10">
    <property type="entry name" value="Laminin"/>
    <property type="match status" value="33"/>
</dbReference>
<dbReference type="InterPro" id="IPR002110">
    <property type="entry name" value="Ankyrin_rpt"/>
</dbReference>
<dbReference type="InterPro" id="IPR036770">
    <property type="entry name" value="Ankyrin_rpt-contain_sf"/>
</dbReference>
<dbReference type="InterPro" id="IPR001881">
    <property type="entry name" value="EGF-like_Ca-bd_dom"/>
</dbReference>
<dbReference type="InterPro" id="IPR013032">
    <property type="entry name" value="EGF-like_CS"/>
</dbReference>
<dbReference type="InterPro" id="IPR000742">
    <property type="entry name" value="EGF-like_dom"/>
</dbReference>
<dbReference type="InterPro" id="IPR000152">
    <property type="entry name" value="EGF-type_Asp/Asn_hydroxyl_site"/>
</dbReference>
<dbReference type="InterPro" id="IPR018097">
    <property type="entry name" value="EGF_Ca-bd_CS"/>
</dbReference>
<dbReference type="InterPro" id="IPR009030">
    <property type="entry name" value="Growth_fac_rcpt_cys_sf"/>
</dbReference>
<dbReference type="InterPro" id="IPR008297">
    <property type="entry name" value="Notch"/>
</dbReference>
<dbReference type="InterPro" id="IPR035993">
    <property type="entry name" value="Notch-like_dom_sf"/>
</dbReference>
<dbReference type="InterPro" id="IPR051355">
    <property type="entry name" value="Notch/Slit_guidance"/>
</dbReference>
<dbReference type="InterPro" id="IPR049883">
    <property type="entry name" value="NOTCH1_EGF-like"/>
</dbReference>
<dbReference type="InterPro" id="IPR022331">
    <property type="entry name" value="Notch_3"/>
</dbReference>
<dbReference type="InterPro" id="IPR024600">
    <property type="entry name" value="Notch_C"/>
</dbReference>
<dbReference type="InterPro" id="IPR000800">
    <property type="entry name" value="Notch_dom"/>
</dbReference>
<dbReference type="InterPro" id="IPR010660">
    <property type="entry name" value="Notch_NOD_dom"/>
</dbReference>
<dbReference type="InterPro" id="IPR011656">
    <property type="entry name" value="Notch_NODP_dom"/>
</dbReference>
<dbReference type="PANTHER" id="PTHR45836:SF17">
    <property type="entry name" value="NEUROGENIC LOCUS NOTCH HOMOLOG PROTEIN 3"/>
    <property type="match status" value="1"/>
</dbReference>
<dbReference type="PANTHER" id="PTHR45836">
    <property type="entry name" value="SLIT HOMOLOG"/>
    <property type="match status" value="1"/>
</dbReference>
<dbReference type="Pfam" id="PF00023">
    <property type="entry name" value="Ank"/>
    <property type="match status" value="1"/>
</dbReference>
<dbReference type="Pfam" id="PF12796">
    <property type="entry name" value="Ank_2"/>
    <property type="match status" value="2"/>
</dbReference>
<dbReference type="Pfam" id="PF00008">
    <property type="entry name" value="EGF"/>
    <property type="match status" value="11"/>
</dbReference>
<dbReference type="Pfam" id="PF07645">
    <property type="entry name" value="EGF_CA"/>
    <property type="match status" value="2"/>
</dbReference>
<dbReference type="Pfam" id="PF25024">
    <property type="entry name" value="EGF_TEN"/>
    <property type="match status" value="1"/>
</dbReference>
<dbReference type="Pfam" id="PF12661">
    <property type="entry name" value="hEGF"/>
    <property type="match status" value="7"/>
</dbReference>
<dbReference type="Pfam" id="PF06816">
    <property type="entry name" value="NOD"/>
    <property type="match status" value="1"/>
</dbReference>
<dbReference type="Pfam" id="PF07684">
    <property type="entry name" value="NODP"/>
    <property type="match status" value="1"/>
</dbReference>
<dbReference type="Pfam" id="PF00066">
    <property type="entry name" value="Notch"/>
    <property type="match status" value="3"/>
</dbReference>
<dbReference type="PIRSF" id="PIRSF002279">
    <property type="entry name" value="Notch"/>
    <property type="match status" value="1"/>
</dbReference>
<dbReference type="PRINTS" id="PR00010">
    <property type="entry name" value="EGFBLOOD"/>
</dbReference>
<dbReference type="PRINTS" id="PR01452">
    <property type="entry name" value="LNOTCHREPEAT"/>
</dbReference>
<dbReference type="PRINTS" id="PR01983">
    <property type="entry name" value="NOTCH"/>
</dbReference>
<dbReference type="PRINTS" id="PR01986">
    <property type="entry name" value="NOTCH3"/>
</dbReference>
<dbReference type="SMART" id="SM00248">
    <property type="entry name" value="ANK"/>
    <property type="match status" value="6"/>
</dbReference>
<dbReference type="SMART" id="SM01334">
    <property type="entry name" value="DUF3454"/>
    <property type="match status" value="1"/>
</dbReference>
<dbReference type="SMART" id="SM00181">
    <property type="entry name" value="EGF"/>
    <property type="match status" value="34"/>
</dbReference>
<dbReference type="SMART" id="SM00179">
    <property type="entry name" value="EGF_CA"/>
    <property type="match status" value="30"/>
</dbReference>
<dbReference type="SMART" id="SM00004">
    <property type="entry name" value="NL"/>
    <property type="match status" value="3"/>
</dbReference>
<dbReference type="SMART" id="SM01338">
    <property type="entry name" value="NOD"/>
    <property type="match status" value="1"/>
</dbReference>
<dbReference type="SMART" id="SM01339">
    <property type="entry name" value="NODP"/>
    <property type="match status" value="1"/>
</dbReference>
<dbReference type="SUPFAM" id="SSF48403">
    <property type="entry name" value="Ankyrin repeat"/>
    <property type="match status" value="1"/>
</dbReference>
<dbReference type="SUPFAM" id="SSF57196">
    <property type="entry name" value="EGF/Laminin"/>
    <property type="match status" value="17"/>
</dbReference>
<dbReference type="SUPFAM" id="SSF57184">
    <property type="entry name" value="Growth factor receptor domain"/>
    <property type="match status" value="5"/>
</dbReference>
<dbReference type="SUPFAM" id="SSF90193">
    <property type="entry name" value="Notch domain"/>
    <property type="match status" value="3"/>
</dbReference>
<dbReference type="PROSITE" id="PS50297">
    <property type="entry name" value="ANK_REP_REGION"/>
    <property type="match status" value="1"/>
</dbReference>
<dbReference type="PROSITE" id="PS50088">
    <property type="entry name" value="ANK_REPEAT"/>
    <property type="match status" value="4"/>
</dbReference>
<dbReference type="PROSITE" id="PS00010">
    <property type="entry name" value="ASX_HYDROXYL"/>
    <property type="match status" value="18"/>
</dbReference>
<dbReference type="PROSITE" id="PS00022">
    <property type="entry name" value="EGF_1"/>
    <property type="match status" value="33"/>
</dbReference>
<dbReference type="PROSITE" id="PS01186">
    <property type="entry name" value="EGF_2"/>
    <property type="match status" value="26"/>
</dbReference>
<dbReference type="PROSITE" id="PS50026">
    <property type="entry name" value="EGF_3"/>
    <property type="match status" value="34"/>
</dbReference>
<dbReference type="PROSITE" id="PS01187">
    <property type="entry name" value="EGF_CA"/>
    <property type="match status" value="16"/>
</dbReference>
<dbReference type="PROSITE" id="PS50258">
    <property type="entry name" value="LNR"/>
    <property type="match status" value="3"/>
</dbReference>
<comment type="function">
    <text evidence="1 7">Functions as a receptor for membrane-bound ligands Jagged1, Jagged2 and Delta1 to regulate cell-fate determination. Upon ligand activation through the released notch intracellular domain (NICD) it forms a transcriptional activator complex with RBPJ/RBPSUH and activates genes of the enhancer of split locus. Affects the implementation of differentiation, proliferation and apoptotic programs (By similarity). Acts instructively to control the cell fate determination of CNS multipotent progenitor cells, resulting in astroglial induction and neuron/oligodendrocyte suppression.</text>
</comment>
<comment type="subunit">
    <text evidence="1">Heterodimer of a C-terminal fragment N(TM) and a N-terminal fragment N(EC) which are probably linked by disulfide bonds. Interacts with MAML1, MAML2 and MAML3 which act as transcriptional coactivators for NOTCH3. Interacts with PSMA1 (By similarity). Interacts with HIF1AN (By similarity).</text>
</comment>
<comment type="subcellular location">
    <subcellularLocation>
        <location evidence="3">Cell membrane</location>
        <topology>Single-pass type I membrane protein</topology>
    </subcellularLocation>
</comment>
<comment type="subcellular location">
    <molecule>Notch 3 intracellular domain</molecule>
    <subcellularLocation>
        <location>Nucleus</location>
    </subcellularLocation>
    <text>Following proteolytical processing NICD is translocated to the nucleus.</text>
</comment>
<comment type="tissue specificity">
    <text evidence="8">Expressed in postnatal central nervous system (CNS) germinal zones and, in early postnatal life, within numerous cells throughout the CNS. It is more highly localized to ventricular germinal zones.</text>
</comment>
<comment type="domain">
    <text evidence="3">The EGF-like domains 10 and 11 are required for binding the ligands JAG1 and DLL1.</text>
</comment>
<comment type="PTM">
    <text evidence="2">Synthesized in the endoplasmic reticulum as an inactive form which is proteolytically cleaved by a furin-like convertase in the trans-Golgi network before it reaches the plasma membrane to yield an active, ligand-accessible form. Cleavage results in a C-terminal fragment N(TM) and a N-terminal fragment N(EC). Following ligand binding, it is cleaved by TNF-alpha converting enzyme (TACE) to yield a membrane-associated intermediate fragment called notch extracellular truncation (NEXT). This fragment is then cleaved by presenilin dependent gamma-secretase to release a notch-derived peptide containing the intracellular domain (NICD) from the membrane (By similarity).</text>
</comment>
<comment type="PTM">
    <text evidence="1">Phosphorylated.</text>
</comment>
<comment type="PTM">
    <text evidence="1">Hydroxylated by HIF1AN.</text>
</comment>
<comment type="similarity">
    <text evidence="9">Belongs to the NOTCH family.</text>
</comment>
<protein>
    <recommendedName>
        <fullName>Neurogenic locus notch homolog protein 3</fullName>
        <shortName>Notch 3</shortName>
    </recommendedName>
    <component>
        <recommendedName>
            <fullName>Notch 3 extracellular truncation</fullName>
        </recommendedName>
    </component>
    <component>
        <recommendedName>
            <fullName>Notch 3 intracellular domain</fullName>
        </recommendedName>
    </component>
</protein>